<protein>
    <recommendedName>
        <fullName evidence="1">Probable cell division protein WhiA</fullName>
    </recommendedName>
</protein>
<proteinExistence type="inferred from homology"/>
<evidence type="ECO:0000255" key="1">
    <source>
        <dbReference type="HAMAP-Rule" id="MF_01420"/>
    </source>
</evidence>
<reference key="1">
    <citation type="journal article" date="2006" name="Proc. Natl. Acad. Sci. U.S.A.">
        <title>Multireplicon genome architecture of Lactobacillus salivarius.</title>
        <authorList>
            <person name="Claesson M.J."/>
            <person name="Li Y."/>
            <person name="Leahy S."/>
            <person name="Canchaya C."/>
            <person name="van Pijkeren J.P."/>
            <person name="Cerdeno-Tarraga A.M."/>
            <person name="Parkhill J."/>
            <person name="Flynn S."/>
            <person name="O'Sullivan G.C."/>
            <person name="Collins J.K."/>
            <person name="Higgins D."/>
            <person name="Shanahan F."/>
            <person name="Fitzgerald G.F."/>
            <person name="van Sinderen D."/>
            <person name="O'Toole P.W."/>
        </authorList>
    </citation>
    <scope>NUCLEOTIDE SEQUENCE [LARGE SCALE GENOMIC DNA]</scope>
    <source>
        <strain>UCC118</strain>
    </source>
</reference>
<name>WHIA_LIGS1</name>
<comment type="function">
    <text evidence="1">Involved in cell division and chromosome segregation.</text>
</comment>
<comment type="similarity">
    <text evidence="1">Belongs to the WhiA family.</text>
</comment>
<dbReference type="EMBL" id="CP000233">
    <property type="protein sequence ID" value="ABD99977.1"/>
    <property type="molecule type" value="Genomic_DNA"/>
</dbReference>
<dbReference type="RefSeq" id="WP_003700622.1">
    <property type="nucleotide sequence ID" value="NC_007929.1"/>
</dbReference>
<dbReference type="RefSeq" id="YP_536060.1">
    <property type="nucleotide sequence ID" value="NC_007929.1"/>
</dbReference>
<dbReference type="SMR" id="Q1WT80"/>
<dbReference type="STRING" id="362948.LSL_1169"/>
<dbReference type="GeneID" id="89465915"/>
<dbReference type="KEGG" id="lsl:LSL_1169"/>
<dbReference type="PATRIC" id="fig|362948.14.peg.1243"/>
<dbReference type="HOGENOM" id="CLU_053282_1_0_9"/>
<dbReference type="OrthoDB" id="401278at2"/>
<dbReference type="Proteomes" id="UP000006559">
    <property type="component" value="Chromosome"/>
</dbReference>
<dbReference type="GO" id="GO:0003677">
    <property type="term" value="F:DNA binding"/>
    <property type="evidence" value="ECO:0007669"/>
    <property type="project" value="UniProtKB-UniRule"/>
</dbReference>
<dbReference type="GO" id="GO:0051301">
    <property type="term" value="P:cell division"/>
    <property type="evidence" value="ECO:0007669"/>
    <property type="project" value="UniProtKB-UniRule"/>
</dbReference>
<dbReference type="GO" id="GO:0043937">
    <property type="term" value="P:regulation of sporulation"/>
    <property type="evidence" value="ECO:0007669"/>
    <property type="project" value="InterPro"/>
</dbReference>
<dbReference type="FunFam" id="3.10.28.10:FF:000002">
    <property type="entry name" value="Probable cell division protein WhiA"/>
    <property type="match status" value="1"/>
</dbReference>
<dbReference type="Gene3D" id="3.10.28.10">
    <property type="entry name" value="Homing endonucleases"/>
    <property type="match status" value="1"/>
</dbReference>
<dbReference type="HAMAP" id="MF_01420">
    <property type="entry name" value="HTH_type_WhiA"/>
    <property type="match status" value="1"/>
</dbReference>
<dbReference type="InterPro" id="IPR027434">
    <property type="entry name" value="Homing_endonucl"/>
</dbReference>
<dbReference type="InterPro" id="IPR018478">
    <property type="entry name" value="Sporu_reg_WhiA_N_dom"/>
</dbReference>
<dbReference type="InterPro" id="IPR003802">
    <property type="entry name" value="Sporulation_regulator_WhiA"/>
</dbReference>
<dbReference type="InterPro" id="IPR023054">
    <property type="entry name" value="Sporulation_regulator_WhiA_C"/>
</dbReference>
<dbReference type="InterPro" id="IPR039518">
    <property type="entry name" value="WhiA_LAGLIDADG_dom"/>
</dbReference>
<dbReference type="NCBIfam" id="TIGR00647">
    <property type="entry name" value="DNA_bind_WhiA"/>
    <property type="match status" value="1"/>
</dbReference>
<dbReference type="PANTHER" id="PTHR37307">
    <property type="entry name" value="CELL DIVISION PROTEIN WHIA-RELATED"/>
    <property type="match status" value="1"/>
</dbReference>
<dbReference type="PANTHER" id="PTHR37307:SF1">
    <property type="entry name" value="CELL DIVISION PROTEIN WHIA-RELATED"/>
    <property type="match status" value="1"/>
</dbReference>
<dbReference type="Pfam" id="PF02650">
    <property type="entry name" value="HTH_WhiA"/>
    <property type="match status" value="1"/>
</dbReference>
<dbReference type="Pfam" id="PF14527">
    <property type="entry name" value="LAGLIDADG_WhiA"/>
    <property type="match status" value="1"/>
</dbReference>
<dbReference type="Pfam" id="PF10298">
    <property type="entry name" value="WhiA_N"/>
    <property type="match status" value="1"/>
</dbReference>
<dbReference type="SUPFAM" id="SSF55608">
    <property type="entry name" value="Homing endonucleases"/>
    <property type="match status" value="1"/>
</dbReference>
<organism>
    <name type="scientific">Ligilactobacillus salivarius (strain UCC118)</name>
    <name type="common">Lactobacillus salivarius</name>
    <dbReference type="NCBI Taxonomy" id="362948"/>
    <lineage>
        <taxon>Bacteria</taxon>
        <taxon>Bacillati</taxon>
        <taxon>Bacillota</taxon>
        <taxon>Bacilli</taxon>
        <taxon>Lactobacillales</taxon>
        <taxon>Lactobacillaceae</taxon>
        <taxon>Ligilactobacillus</taxon>
    </lineage>
</organism>
<sequence length="315" mass="35947">MSYASDVKKELTMLEVHFGNAKAELMALIRMNGSLSIVNKQFVLSVQTENPAIARRIYRLLKQFYDIESELIVRRKMKLKKNNFYIVRLKTGTNEILKDLDILDNFQIKETVPLEFLDDDAKVRSYLRGAFLATGSVNNPETSRYHLEIYSLYEDHNDTICEMMNRYGLNARKTERRSGYITYLKEAEKIADFLSLIGATNAMLKFEDIRIVRDMRNSVNRIVNCETANLNKIADASKKQIDNIKLIDAKVGIDKLPQKLQEVAIARLGHPEESLKNLGELIPGGPISKSGINHRLRKLNEIAEKIRAGESIAVL</sequence>
<gene>
    <name evidence="1" type="primary">whiA</name>
    <name type="ordered locus">LSL_1169</name>
</gene>
<accession>Q1WT80</accession>
<keyword id="KW-0131">Cell cycle</keyword>
<keyword id="KW-0132">Cell division</keyword>
<keyword id="KW-0238">DNA-binding</keyword>
<keyword id="KW-1185">Reference proteome</keyword>
<feature type="chain" id="PRO_0000376507" description="Probable cell division protein WhiA">
    <location>
        <begin position="1"/>
        <end position="315"/>
    </location>
</feature>
<feature type="DNA-binding region" description="H-T-H motif" evidence="1">
    <location>
        <begin position="274"/>
        <end position="308"/>
    </location>
</feature>